<accession>B9JXE6</accession>
<sequence length="585" mass="64890">MNLFADFENRIKTALETLDLVKEKRSELSFDRIVVEPPRDASHGDAATNAAMVLAKPLGVSPRVLADLIGEKLKEDADIAEVSVAGPGFLNIRLSVAYWQRLLANVIAGGTDFGRSQTGAGRKVNVEYVSANPTGPMHVGHCRGAVVGDALANLLAFAGYGVTKEYYINDAGSQIDVLARSVFLRYREALGEAVGEIPAGLYPGDYLIPVGEALAQEYGVRLHNMPEEQWMEIVKDRAIDAMMVMIREDLAALNVHHDLFYSERQLHANGAAAIRTAINDLTFKGHVYRGTLPPPKGQLPEDWEDREQTLFRSTEVGDDIDRPLIKSDGSYTYFAADVAYFKDKYDRGFDRMIYVLGADHGGYVKRLEAVAKAVSEGKAKLTVLLCQLVKLYRDGEPVKMSKRSGDFVTLRDVVEEVGRDSVRFMMLYRKSSEPLDFDFAKVTEQSKDNPVFYVQYAHARCMSIFRQAREAFGDIDLSPDVLEAAVTGITEPSEVQLIAKLAEYPRIIEASAQSMEPHRIAFYLYDLASSFHAHWNKGKDQPELRFVNDKNRQSSLARLGLVHAVASVLQSGLAITGTDAPQEMR</sequence>
<dbReference type="EC" id="6.1.1.19" evidence="1"/>
<dbReference type="EMBL" id="CP000633">
    <property type="protein sequence ID" value="ACM36924.1"/>
    <property type="molecule type" value="Genomic_DNA"/>
</dbReference>
<dbReference type="RefSeq" id="WP_015916345.1">
    <property type="nucleotide sequence ID" value="NC_011989.1"/>
</dbReference>
<dbReference type="SMR" id="B9JXE6"/>
<dbReference type="STRING" id="311402.Avi_2675"/>
<dbReference type="KEGG" id="avi:Avi_2675"/>
<dbReference type="eggNOG" id="COG0018">
    <property type="taxonomic scope" value="Bacteria"/>
</dbReference>
<dbReference type="HOGENOM" id="CLU_006406_0_1_5"/>
<dbReference type="Proteomes" id="UP000001596">
    <property type="component" value="Chromosome 1"/>
</dbReference>
<dbReference type="GO" id="GO:0005737">
    <property type="term" value="C:cytoplasm"/>
    <property type="evidence" value="ECO:0007669"/>
    <property type="project" value="UniProtKB-SubCell"/>
</dbReference>
<dbReference type="GO" id="GO:0004814">
    <property type="term" value="F:arginine-tRNA ligase activity"/>
    <property type="evidence" value="ECO:0007669"/>
    <property type="project" value="UniProtKB-UniRule"/>
</dbReference>
<dbReference type="GO" id="GO:0005524">
    <property type="term" value="F:ATP binding"/>
    <property type="evidence" value="ECO:0007669"/>
    <property type="project" value="UniProtKB-UniRule"/>
</dbReference>
<dbReference type="GO" id="GO:0006420">
    <property type="term" value="P:arginyl-tRNA aminoacylation"/>
    <property type="evidence" value="ECO:0007669"/>
    <property type="project" value="UniProtKB-UniRule"/>
</dbReference>
<dbReference type="CDD" id="cd00671">
    <property type="entry name" value="ArgRS_core"/>
    <property type="match status" value="1"/>
</dbReference>
<dbReference type="FunFam" id="1.10.730.10:FF:000008">
    <property type="entry name" value="Arginine--tRNA ligase"/>
    <property type="match status" value="1"/>
</dbReference>
<dbReference type="Gene3D" id="3.30.1360.70">
    <property type="entry name" value="Arginyl tRNA synthetase N-terminal domain"/>
    <property type="match status" value="1"/>
</dbReference>
<dbReference type="Gene3D" id="3.40.50.620">
    <property type="entry name" value="HUPs"/>
    <property type="match status" value="1"/>
</dbReference>
<dbReference type="Gene3D" id="1.10.730.10">
    <property type="entry name" value="Isoleucyl-tRNA Synthetase, Domain 1"/>
    <property type="match status" value="1"/>
</dbReference>
<dbReference type="HAMAP" id="MF_00123">
    <property type="entry name" value="Arg_tRNA_synth"/>
    <property type="match status" value="1"/>
</dbReference>
<dbReference type="InterPro" id="IPR001412">
    <property type="entry name" value="aa-tRNA-synth_I_CS"/>
</dbReference>
<dbReference type="InterPro" id="IPR001278">
    <property type="entry name" value="Arg-tRNA-ligase"/>
</dbReference>
<dbReference type="InterPro" id="IPR005148">
    <property type="entry name" value="Arg-tRNA-synth_N"/>
</dbReference>
<dbReference type="InterPro" id="IPR036695">
    <property type="entry name" value="Arg-tRNA-synth_N_sf"/>
</dbReference>
<dbReference type="InterPro" id="IPR035684">
    <property type="entry name" value="ArgRS_core"/>
</dbReference>
<dbReference type="InterPro" id="IPR008909">
    <property type="entry name" value="DALR_anticod-bd"/>
</dbReference>
<dbReference type="InterPro" id="IPR014729">
    <property type="entry name" value="Rossmann-like_a/b/a_fold"/>
</dbReference>
<dbReference type="InterPro" id="IPR009080">
    <property type="entry name" value="tRNAsynth_Ia_anticodon-bd"/>
</dbReference>
<dbReference type="NCBIfam" id="TIGR00456">
    <property type="entry name" value="argS"/>
    <property type="match status" value="1"/>
</dbReference>
<dbReference type="PANTHER" id="PTHR11956:SF5">
    <property type="entry name" value="ARGININE--TRNA LIGASE, CYTOPLASMIC"/>
    <property type="match status" value="1"/>
</dbReference>
<dbReference type="PANTHER" id="PTHR11956">
    <property type="entry name" value="ARGINYL-TRNA SYNTHETASE"/>
    <property type="match status" value="1"/>
</dbReference>
<dbReference type="Pfam" id="PF03485">
    <property type="entry name" value="Arg_tRNA_synt_N"/>
    <property type="match status" value="1"/>
</dbReference>
<dbReference type="Pfam" id="PF05746">
    <property type="entry name" value="DALR_1"/>
    <property type="match status" value="1"/>
</dbReference>
<dbReference type="Pfam" id="PF00750">
    <property type="entry name" value="tRNA-synt_1d"/>
    <property type="match status" value="2"/>
</dbReference>
<dbReference type="PRINTS" id="PR01038">
    <property type="entry name" value="TRNASYNTHARG"/>
</dbReference>
<dbReference type="SMART" id="SM01016">
    <property type="entry name" value="Arg_tRNA_synt_N"/>
    <property type="match status" value="1"/>
</dbReference>
<dbReference type="SMART" id="SM00836">
    <property type="entry name" value="DALR_1"/>
    <property type="match status" value="1"/>
</dbReference>
<dbReference type="SUPFAM" id="SSF47323">
    <property type="entry name" value="Anticodon-binding domain of a subclass of class I aminoacyl-tRNA synthetases"/>
    <property type="match status" value="1"/>
</dbReference>
<dbReference type="SUPFAM" id="SSF55190">
    <property type="entry name" value="Arginyl-tRNA synthetase (ArgRS), N-terminal 'additional' domain"/>
    <property type="match status" value="1"/>
</dbReference>
<dbReference type="SUPFAM" id="SSF52374">
    <property type="entry name" value="Nucleotidylyl transferase"/>
    <property type="match status" value="1"/>
</dbReference>
<dbReference type="PROSITE" id="PS00178">
    <property type="entry name" value="AA_TRNA_LIGASE_I"/>
    <property type="match status" value="1"/>
</dbReference>
<name>SYR_ALLAM</name>
<organism>
    <name type="scientific">Allorhizobium ampelinum (strain ATCC BAA-846 / DSM 112012 / S4)</name>
    <name type="common">Agrobacterium vitis (strain S4)</name>
    <dbReference type="NCBI Taxonomy" id="311402"/>
    <lineage>
        <taxon>Bacteria</taxon>
        <taxon>Pseudomonadati</taxon>
        <taxon>Pseudomonadota</taxon>
        <taxon>Alphaproteobacteria</taxon>
        <taxon>Hyphomicrobiales</taxon>
        <taxon>Rhizobiaceae</taxon>
        <taxon>Rhizobium/Agrobacterium group</taxon>
        <taxon>Allorhizobium</taxon>
        <taxon>Allorhizobium ampelinum</taxon>
    </lineage>
</organism>
<keyword id="KW-0030">Aminoacyl-tRNA synthetase</keyword>
<keyword id="KW-0067">ATP-binding</keyword>
<keyword id="KW-0963">Cytoplasm</keyword>
<keyword id="KW-0436">Ligase</keyword>
<keyword id="KW-0547">Nucleotide-binding</keyword>
<keyword id="KW-0648">Protein biosynthesis</keyword>
<keyword id="KW-1185">Reference proteome</keyword>
<gene>
    <name evidence="1" type="primary">argS</name>
    <name type="ordered locus">Avi_2675</name>
</gene>
<proteinExistence type="inferred from homology"/>
<reference key="1">
    <citation type="journal article" date="2009" name="J. Bacteriol.">
        <title>Genome sequences of three Agrobacterium biovars help elucidate the evolution of multichromosome genomes in bacteria.</title>
        <authorList>
            <person name="Slater S.C."/>
            <person name="Goldman B.S."/>
            <person name="Goodner B."/>
            <person name="Setubal J.C."/>
            <person name="Farrand S.K."/>
            <person name="Nester E.W."/>
            <person name="Burr T.J."/>
            <person name="Banta L."/>
            <person name="Dickerman A.W."/>
            <person name="Paulsen I."/>
            <person name="Otten L."/>
            <person name="Suen G."/>
            <person name="Welch R."/>
            <person name="Almeida N.F."/>
            <person name="Arnold F."/>
            <person name="Burton O.T."/>
            <person name="Du Z."/>
            <person name="Ewing A."/>
            <person name="Godsy E."/>
            <person name="Heisel S."/>
            <person name="Houmiel K.L."/>
            <person name="Jhaveri J."/>
            <person name="Lu J."/>
            <person name="Miller N.M."/>
            <person name="Norton S."/>
            <person name="Chen Q."/>
            <person name="Phoolcharoen W."/>
            <person name="Ohlin V."/>
            <person name="Ondrusek D."/>
            <person name="Pride N."/>
            <person name="Stricklin S.L."/>
            <person name="Sun J."/>
            <person name="Wheeler C."/>
            <person name="Wilson L."/>
            <person name="Zhu H."/>
            <person name="Wood D.W."/>
        </authorList>
    </citation>
    <scope>NUCLEOTIDE SEQUENCE [LARGE SCALE GENOMIC DNA]</scope>
    <source>
        <strain>ATCC BAA-846 / DSM 112012 / S4</strain>
    </source>
</reference>
<evidence type="ECO:0000255" key="1">
    <source>
        <dbReference type="HAMAP-Rule" id="MF_00123"/>
    </source>
</evidence>
<protein>
    <recommendedName>
        <fullName evidence="1">Arginine--tRNA ligase</fullName>
        <ecNumber evidence="1">6.1.1.19</ecNumber>
    </recommendedName>
    <alternativeName>
        <fullName evidence="1">Arginyl-tRNA synthetase</fullName>
        <shortName evidence="1">ArgRS</shortName>
    </alternativeName>
</protein>
<comment type="catalytic activity">
    <reaction evidence="1">
        <text>tRNA(Arg) + L-arginine + ATP = L-arginyl-tRNA(Arg) + AMP + diphosphate</text>
        <dbReference type="Rhea" id="RHEA:20301"/>
        <dbReference type="Rhea" id="RHEA-COMP:9658"/>
        <dbReference type="Rhea" id="RHEA-COMP:9673"/>
        <dbReference type="ChEBI" id="CHEBI:30616"/>
        <dbReference type="ChEBI" id="CHEBI:32682"/>
        <dbReference type="ChEBI" id="CHEBI:33019"/>
        <dbReference type="ChEBI" id="CHEBI:78442"/>
        <dbReference type="ChEBI" id="CHEBI:78513"/>
        <dbReference type="ChEBI" id="CHEBI:456215"/>
        <dbReference type="EC" id="6.1.1.19"/>
    </reaction>
</comment>
<comment type="subunit">
    <text evidence="1">Monomer.</text>
</comment>
<comment type="subcellular location">
    <subcellularLocation>
        <location evidence="1">Cytoplasm</location>
    </subcellularLocation>
</comment>
<comment type="similarity">
    <text evidence="1">Belongs to the class-I aminoacyl-tRNA synthetase family.</text>
</comment>
<feature type="chain" id="PRO_1000198867" description="Arginine--tRNA ligase">
    <location>
        <begin position="1"/>
        <end position="585"/>
    </location>
</feature>
<feature type="short sequence motif" description="'HIGH' region">
    <location>
        <begin position="131"/>
        <end position="141"/>
    </location>
</feature>